<name>NUON_SERP5</name>
<evidence type="ECO:0000255" key="1">
    <source>
        <dbReference type="HAMAP-Rule" id="MF_00445"/>
    </source>
</evidence>
<reference key="1">
    <citation type="submission" date="2007-09" db="EMBL/GenBank/DDBJ databases">
        <title>Complete sequence of chromosome of Serratia proteamaculans 568.</title>
        <authorList>
            <consortium name="US DOE Joint Genome Institute"/>
            <person name="Copeland A."/>
            <person name="Lucas S."/>
            <person name="Lapidus A."/>
            <person name="Barry K."/>
            <person name="Glavina del Rio T."/>
            <person name="Dalin E."/>
            <person name="Tice H."/>
            <person name="Pitluck S."/>
            <person name="Chain P."/>
            <person name="Malfatti S."/>
            <person name="Shin M."/>
            <person name="Vergez L."/>
            <person name="Schmutz J."/>
            <person name="Larimer F."/>
            <person name="Land M."/>
            <person name="Hauser L."/>
            <person name="Kyrpides N."/>
            <person name="Kim E."/>
            <person name="Taghavi S."/>
            <person name="Newman L."/>
            <person name="Vangronsveld J."/>
            <person name="van der Lelie D."/>
            <person name="Richardson P."/>
        </authorList>
    </citation>
    <scope>NUCLEOTIDE SEQUENCE [LARGE SCALE GENOMIC DNA]</scope>
    <source>
        <strain>568</strain>
    </source>
</reference>
<sequence>MTITPQQLIALLPLLIVGLTVVVVMLGIAWRRDHFINATLTVIGLNLALLSLYFVGQAGPMDVTPLLRVDGYSMFYTGLVILASLATCTFAYPWLVGYPDNREEFYLLVLIATLGGILLASANHLASLFLGIELISLPLFGLVGYAYRQKRPLEAAIKYMLLSAAASSFLLFGMALLYAESGDLSLAGLGKSLQENMMHQPLVLAGMGMMIVGLGFKLSLVPFQLWTPDVYQGAPAPVSTFLATASKIAIFAVVMRLFLYAPAADNEALRMVLSIIAVCSILFGNLMAISQTNIKRLLGYSSIAHLGYLLVALIAVQTHQLSLETAGVYLAGYLFSSLGAFGVVSLMSSPYRGPDADSLFSYRGLFWHKPILSAVMTVMMLSLAGIPMTLGFIGKFFVIAMGVSAHLWWLTGAVVLGSAIGLYYYLRVTVSLFLSAPEALQRDTPNNWALTAGGVVVLISAALVLLLGVYPQPLITLVQMAQPMF</sequence>
<dbReference type="EC" id="7.1.1.-" evidence="1"/>
<dbReference type="EMBL" id="CP000826">
    <property type="protein sequence ID" value="ABV42394.1"/>
    <property type="molecule type" value="Genomic_DNA"/>
</dbReference>
<dbReference type="SMR" id="A8GH04"/>
<dbReference type="STRING" id="399741.Spro_3296"/>
<dbReference type="KEGG" id="spe:Spro_3296"/>
<dbReference type="eggNOG" id="COG1007">
    <property type="taxonomic scope" value="Bacteria"/>
</dbReference>
<dbReference type="HOGENOM" id="CLU_007100_1_5_6"/>
<dbReference type="OrthoDB" id="9768329at2"/>
<dbReference type="GO" id="GO:0005886">
    <property type="term" value="C:plasma membrane"/>
    <property type="evidence" value="ECO:0007669"/>
    <property type="project" value="UniProtKB-SubCell"/>
</dbReference>
<dbReference type="GO" id="GO:0008137">
    <property type="term" value="F:NADH dehydrogenase (ubiquinone) activity"/>
    <property type="evidence" value="ECO:0007669"/>
    <property type="project" value="InterPro"/>
</dbReference>
<dbReference type="GO" id="GO:0050136">
    <property type="term" value="F:NADH:ubiquinone reductase (non-electrogenic) activity"/>
    <property type="evidence" value="ECO:0007669"/>
    <property type="project" value="UniProtKB-UniRule"/>
</dbReference>
<dbReference type="GO" id="GO:0048038">
    <property type="term" value="F:quinone binding"/>
    <property type="evidence" value="ECO:0007669"/>
    <property type="project" value="UniProtKB-KW"/>
</dbReference>
<dbReference type="GO" id="GO:0042773">
    <property type="term" value="P:ATP synthesis coupled electron transport"/>
    <property type="evidence" value="ECO:0007669"/>
    <property type="project" value="InterPro"/>
</dbReference>
<dbReference type="HAMAP" id="MF_00445">
    <property type="entry name" value="NDH1_NuoN_1"/>
    <property type="match status" value="1"/>
</dbReference>
<dbReference type="InterPro" id="IPR010096">
    <property type="entry name" value="NADH-Q_OxRdtase_suN/2"/>
</dbReference>
<dbReference type="InterPro" id="IPR001750">
    <property type="entry name" value="ND/Mrp_TM"/>
</dbReference>
<dbReference type="NCBIfam" id="TIGR01770">
    <property type="entry name" value="NDH_I_N"/>
    <property type="match status" value="1"/>
</dbReference>
<dbReference type="NCBIfam" id="NF004439">
    <property type="entry name" value="PRK05777.1-1"/>
    <property type="match status" value="1"/>
</dbReference>
<dbReference type="PANTHER" id="PTHR22773">
    <property type="entry name" value="NADH DEHYDROGENASE"/>
    <property type="match status" value="1"/>
</dbReference>
<dbReference type="Pfam" id="PF00361">
    <property type="entry name" value="Proton_antipo_M"/>
    <property type="match status" value="1"/>
</dbReference>
<feature type="chain" id="PRO_1000068540" description="NADH-quinone oxidoreductase subunit N">
    <location>
        <begin position="1"/>
        <end position="485"/>
    </location>
</feature>
<feature type="transmembrane region" description="Helical" evidence="1">
    <location>
        <begin position="8"/>
        <end position="28"/>
    </location>
</feature>
<feature type="transmembrane region" description="Helical" evidence="1">
    <location>
        <begin position="35"/>
        <end position="55"/>
    </location>
</feature>
<feature type="transmembrane region" description="Helical" evidence="1">
    <location>
        <begin position="78"/>
        <end position="98"/>
    </location>
</feature>
<feature type="transmembrane region" description="Helical" evidence="1">
    <location>
        <begin position="104"/>
        <end position="124"/>
    </location>
</feature>
<feature type="transmembrane region" description="Helical" evidence="1">
    <location>
        <begin position="125"/>
        <end position="145"/>
    </location>
</feature>
<feature type="transmembrane region" description="Helical" evidence="1">
    <location>
        <begin position="159"/>
        <end position="179"/>
    </location>
</feature>
<feature type="transmembrane region" description="Helical" evidence="1">
    <location>
        <begin position="203"/>
        <end position="223"/>
    </location>
</feature>
<feature type="transmembrane region" description="Helical" evidence="1">
    <location>
        <begin position="235"/>
        <end position="255"/>
    </location>
</feature>
<feature type="transmembrane region" description="Helical" evidence="1">
    <location>
        <begin position="271"/>
        <end position="291"/>
    </location>
</feature>
<feature type="transmembrane region" description="Helical" evidence="1">
    <location>
        <begin position="297"/>
        <end position="317"/>
    </location>
</feature>
<feature type="transmembrane region" description="Helical" evidence="1">
    <location>
        <begin position="327"/>
        <end position="347"/>
    </location>
</feature>
<feature type="transmembrane region" description="Helical" evidence="1">
    <location>
        <begin position="374"/>
        <end position="394"/>
    </location>
</feature>
<feature type="transmembrane region" description="Helical" evidence="1">
    <location>
        <begin position="408"/>
        <end position="427"/>
    </location>
</feature>
<feature type="transmembrane region" description="Helical" evidence="1">
    <location>
        <begin position="449"/>
        <end position="469"/>
    </location>
</feature>
<gene>
    <name evidence="1" type="primary">nuoN</name>
    <name type="ordered locus">Spro_3296</name>
</gene>
<accession>A8GH04</accession>
<keyword id="KW-0997">Cell inner membrane</keyword>
<keyword id="KW-1003">Cell membrane</keyword>
<keyword id="KW-0472">Membrane</keyword>
<keyword id="KW-0520">NAD</keyword>
<keyword id="KW-0874">Quinone</keyword>
<keyword id="KW-1278">Translocase</keyword>
<keyword id="KW-0812">Transmembrane</keyword>
<keyword id="KW-1133">Transmembrane helix</keyword>
<keyword id="KW-0813">Transport</keyword>
<keyword id="KW-0830">Ubiquinone</keyword>
<protein>
    <recommendedName>
        <fullName evidence="1">NADH-quinone oxidoreductase subunit N</fullName>
        <ecNumber evidence="1">7.1.1.-</ecNumber>
    </recommendedName>
    <alternativeName>
        <fullName evidence="1">NADH dehydrogenase I subunit N</fullName>
    </alternativeName>
    <alternativeName>
        <fullName evidence="1">NDH-1 subunit N</fullName>
    </alternativeName>
</protein>
<organism>
    <name type="scientific">Serratia proteamaculans (strain 568)</name>
    <dbReference type="NCBI Taxonomy" id="399741"/>
    <lineage>
        <taxon>Bacteria</taxon>
        <taxon>Pseudomonadati</taxon>
        <taxon>Pseudomonadota</taxon>
        <taxon>Gammaproteobacteria</taxon>
        <taxon>Enterobacterales</taxon>
        <taxon>Yersiniaceae</taxon>
        <taxon>Serratia</taxon>
    </lineage>
</organism>
<proteinExistence type="inferred from homology"/>
<comment type="function">
    <text evidence="1">NDH-1 shuttles electrons from NADH, via FMN and iron-sulfur (Fe-S) centers, to quinones in the respiratory chain. The immediate electron acceptor for the enzyme in this species is believed to be ubiquinone. Couples the redox reaction to proton translocation (for every two electrons transferred, four hydrogen ions are translocated across the cytoplasmic membrane), and thus conserves the redox energy in a proton gradient.</text>
</comment>
<comment type="catalytic activity">
    <reaction evidence="1">
        <text>a quinone + NADH + 5 H(+)(in) = a quinol + NAD(+) + 4 H(+)(out)</text>
        <dbReference type="Rhea" id="RHEA:57888"/>
        <dbReference type="ChEBI" id="CHEBI:15378"/>
        <dbReference type="ChEBI" id="CHEBI:24646"/>
        <dbReference type="ChEBI" id="CHEBI:57540"/>
        <dbReference type="ChEBI" id="CHEBI:57945"/>
        <dbReference type="ChEBI" id="CHEBI:132124"/>
    </reaction>
</comment>
<comment type="subunit">
    <text evidence="1">NDH-1 is composed of 13 different subunits. Subunits NuoA, H, J, K, L, M, N constitute the membrane sector of the complex.</text>
</comment>
<comment type="subcellular location">
    <subcellularLocation>
        <location evidence="1">Cell inner membrane</location>
        <topology evidence="1">Multi-pass membrane protein</topology>
    </subcellularLocation>
</comment>
<comment type="similarity">
    <text evidence="1">Belongs to the complex I subunit 2 family.</text>
</comment>